<organism>
    <name type="scientific">Pisum sativum</name>
    <name type="common">Garden pea</name>
    <name type="synonym">Lathyrus oleraceus</name>
    <dbReference type="NCBI Taxonomy" id="3888"/>
    <lineage>
        <taxon>Eukaryota</taxon>
        <taxon>Viridiplantae</taxon>
        <taxon>Streptophyta</taxon>
        <taxon>Embryophyta</taxon>
        <taxon>Tracheophyta</taxon>
        <taxon>Spermatophyta</taxon>
        <taxon>Magnoliopsida</taxon>
        <taxon>eudicotyledons</taxon>
        <taxon>Gunneridae</taxon>
        <taxon>Pentapetalae</taxon>
        <taxon>rosids</taxon>
        <taxon>fabids</taxon>
        <taxon>Fabales</taxon>
        <taxon>Fabaceae</taxon>
        <taxon>Papilionoideae</taxon>
        <taxon>50 kb inversion clade</taxon>
        <taxon>NPAAA clade</taxon>
        <taxon>Hologalegina</taxon>
        <taxon>IRL clade</taxon>
        <taxon>Fabeae</taxon>
        <taxon>Pisum</taxon>
    </lineage>
</organism>
<evidence type="ECO:0000250" key="1"/>
<evidence type="ECO:0000250" key="2">
    <source>
        <dbReference type="UniProtKB" id="P11388"/>
    </source>
</evidence>
<evidence type="ECO:0000255" key="3">
    <source>
        <dbReference type="PROSITE-ProRule" id="PRU00995"/>
    </source>
</evidence>
<evidence type="ECO:0000255" key="4">
    <source>
        <dbReference type="PROSITE-ProRule" id="PRU01384"/>
    </source>
</evidence>
<evidence type="ECO:0000256" key="5">
    <source>
        <dbReference type="SAM" id="MobiDB-lite"/>
    </source>
</evidence>
<evidence type="ECO:0000305" key="6"/>
<dbReference type="EC" id="5.6.2.2" evidence="3"/>
<dbReference type="EMBL" id="Y14559">
    <property type="protein sequence ID" value="CAA74891.1"/>
    <property type="molecule type" value="mRNA"/>
</dbReference>
<dbReference type="PIR" id="T06819">
    <property type="entry name" value="T06819"/>
</dbReference>
<dbReference type="SMR" id="O24308"/>
<dbReference type="GO" id="GO:0005634">
    <property type="term" value="C:nucleus"/>
    <property type="evidence" value="ECO:0007669"/>
    <property type="project" value="TreeGrafter"/>
</dbReference>
<dbReference type="GO" id="GO:0005524">
    <property type="term" value="F:ATP binding"/>
    <property type="evidence" value="ECO:0007669"/>
    <property type="project" value="UniProtKB-KW"/>
</dbReference>
<dbReference type="GO" id="GO:0003677">
    <property type="term" value="F:DNA binding"/>
    <property type="evidence" value="ECO:0007669"/>
    <property type="project" value="UniProtKB-KW"/>
</dbReference>
<dbReference type="GO" id="GO:0003918">
    <property type="term" value="F:DNA topoisomerase type II (double strand cut, ATP-hydrolyzing) activity"/>
    <property type="evidence" value="ECO:0007669"/>
    <property type="project" value="UniProtKB-EC"/>
</dbReference>
<dbReference type="GO" id="GO:0046872">
    <property type="term" value="F:metal ion binding"/>
    <property type="evidence" value="ECO:0007669"/>
    <property type="project" value="UniProtKB-KW"/>
</dbReference>
<dbReference type="GO" id="GO:0006265">
    <property type="term" value="P:DNA topological change"/>
    <property type="evidence" value="ECO:0007669"/>
    <property type="project" value="InterPro"/>
</dbReference>
<dbReference type="GO" id="GO:0000712">
    <property type="term" value="P:resolution of meiotic recombination intermediates"/>
    <property type="evidence" value="ECO:0007669"/>
    <property type="project" value="TreeGrafter"/>
</dbReference>
<dbReference type="GO" id="GO:0000819">
    <property type="term" value="P:sister chromatid segregation"/>
    <property type="evidence" value="ECO:0007669"/>
    <property type="project" value="TreeGrafter"/>
</dbReference>
<dbReference type="CDD" id="cd16930">
    <property type="entry name" value="HATPase_TopII-like"/>
    <property type="match status" value="1"/>
</dbReference>
<dbReference type="CDD" id="cd03481">
    <property type="entry name" value="TopoIIA_Trans_ScTopoIIA"/>
    <property type="match status" value="1"/>
</dbReference>
<dbReference type="CDD" id="cd03365">
    <property type="entry name" value="TOPRIM_TopoIIA"/>
    <property type="match status" value="1"/>
</dbReference>
<dbReference type="FunFam" id="3.30.1360.40:FF:000003">
    <property type="entry name" value="DNA topoisomerase 2"/>
    <property type="match status" value="1"/>
</dbReference>
<dbReference type="FunFam" id="3.30.1490.30:FF:000001">
    <property type="entry name" value="DNA topoisomerase 2"/>
    <property type="match status" value="1"/>
</dbReference>
<dbReference type="FunFam" id="3.30.230.10:FF:000008">
    <property type="entry name" value="DNA topoisomerase 2"/>
    <property type="match status" value="1"/>
</dbReference>
<dbReference type="FunFam" id="3.30.565.10:FF:000004">
    <property type="entry name" value="DNA topoisomerase 2"/>
    <property type="match status" value="1"/>
</dbReference>
<dbReference type="FunFam" id="3.40.50.670:FF:000001">
    <property type="entry name" value="DNA topoisomerase 2"/>
    <property type="match status" value="2"/>
</dbReference>
<dbReference type="FunFam" id="3.90.199.10:FF:000002">
    <property type="entry name" value="DNA topoisomerase 2"/>
    <property type="match status" value="1"/>
</dbReference>
<dbReference type="Gene3D" id="3.30.1360.40">
    <property type="match status" value="1"/>
</dbReference>
<dbReference type="Gene3D" id="3.30.1490.30">
    <property type="match status" value="1"/>
</dbReference>
<dbReference type="Gene3D" id="3.30.230.10">
    <property type="match status" value="1"/>
</dbReference>
<dbReference type="Gene3D" id="3.40.50.670">
    <property type="match status" value="1"/>
</dbReference>
<dbReference type="Gene3D" id="3.30.565.10">
    <property type="entry name" value="Histidine kinase-like ATPase, C-terminal domain"/>
    <property type="match status" value="1"/>
</dbReference>
<dbReference type="Gene3D" id="3.90.199.10">
    <property type="entry name" value="Topoisomerase II, domain 5"/>
    <property type="match status" value="1"/>
</dbReference>
<dbReference type="Gene3D" id="1.10.268.10">
    <property type="entry name" value="Topoisomerase, domain 3"/>
    <property type="match status" value="1"/>
</dbReference>
<dbReference type="InterPro" id="IPR050634">
    <property type="entry name" value="DNA_Topoisomerase_II"/>
</dbReference>
<dbReference type="InterPro" id="IPR036890">
    <property type="entry name" value="HATPase_C_sf"/>
</dbReference>
<dbReference type="InterPro" id="IPR020568">
    <property type="entry name" value="Ribosomal_Su5_D2-typ_SF"/>
</dbReference>
<dbReference type="InterPro" id="IPR014721">
    <property type="entry name" value="Ribsml_uS5_D2-typ_fold_subgr"/>
</dbReference>
<dbReference type="InterPro" id="IPR001241">
    <property type="entry name" value="Topo_IIA"/>
</dbReference>
<dbReference type="InterPro" id="IPR013760">
    <property type="entry name" value="Topo_IIA-like_dom_sf"/>
</dbReference>
<dbReference type="InterPro" id="IPR013758">
    <property type="entry name" value="Topo_IIA_A/C_ab"/>
</dbReference>
<dbReference type="InterPro" id="IPR013757">
    <property type="entry name" value="Topo_IIA_A_a_sf"/>
</dbReference>
<dbReference type="InterPro" id="IPR013759">
    <property type="entry name" value="Topo_IIA_B_C"/>
</dbReference>
<dbReference type="InterPro" id="IPR013506">
    <property type="entry name" value="Topo_IIA_bsu_dom2"/>
</dbReference>
<dbReference type="InterPro" id="IPR002205">
    <property type="entry name" value="Topo_IIA_dom_A"/>
</dbReference>
<dbReference type="InterPro" id="IPR001154">
    <property type="entry name" value="TopoII_euk"/>
</dbReference>
<dbReference type="InterPro" id="IPR018522">
    <property type="entry name" value="TopoIIA_CS"/>
</dbReference>
<dbReference type="InterPro" id="IPR031660">
    <property type="entry name" value="TOPRIM_C"/>
</dbReference>
<dbReference type="InterPro" id="IPR006171">
    <property type="entry name" value="TOPRIM_dom"/>
</dbReference>
<dbReference type="InterPro" id="IPR034157">
    <property type="entry name" value="TOPRIM_TopoII"/>
</dbReference>
<dbReference type="PANTHER" id="PTHR10169:SF38">
    <property type="entry name" value="DNA TOPOISOMERASE 2"/>
    <property type="match status" value="1"/>
</dbReference>
<dbReference type="PANTHER" id="PTHR10169">
    <property type="entry name" value="DNA TOPOISOMERASE/GYRASE"/>
    <property type="match status" value="1"/>
</dbReference>
<dbReference type="Pfam" id="PF00204">
    <property type="entry name" value="DNA_gyraseB"/>
    <property type="match status" value="1"/>
</dbReference>
<dbReference type="Pfam" id="PF00521">
    <property type="entry name" value="DNA_topoisoIV"/>
    <property type="match status" value="1"/>
</dbReference>
<dbReference type="Pfam" id="PF02518">
    <property type="entry name" value="HATPase_c"/>
    <property type="match status" value="1"/>
</dbReference>
<dbReference type="Pfam" id="PF01751">
    <property type="entry name" value="Toprim"/>
    <property type="match status" value="1"/>
</dbReference>
<dbReference type="Pfam" id="PF16898">
    <property type="entry name" value="TOPRIM_C"/>
    <property type="match status" value="1"/>
</dbReference>
<dbReference type="PRINTS" id="PR01158">
    <property type="entry name" value="TOPISMRASEII"/>
</dbReference>
<dbReference type="PRINTS" id="PR00418">
    <property type="entry name" value="TPI2FAMILY"/>
</dbReference>
<dbReference type="SMART" id="SM00433">
    <property type="entry name" value="TOP2c"/>
    <property type="match status" value="1"/>
</dbReference>
<dbReference type="SMART" id="SM00434">
    <property type="entry name" value="TOP4c"/>
    <property type="match status" value="1"/>
</dbReference>
<dbReference type="SUPFAM" id="SSF55874">
    <property type="entry name" value="ATPase domain of HSP90 chaperone/DNA topoisomerase II/histidine kinase"/>
    <property type="match status" value="1"/>
</dbReference>
<dbReference type="SUPFAM" id="SSF54211">
    <property type="entry name" value="Ribosomal protein S5 domain 2-like"/>
    <property type="match status" value="1"/>
</dbReference>
<dbReference type="SUPFAM" id="SSF56719">
    <property type="entry name" value="Type II DNA topoisomerase"/>
    <property type="match status" value="1"/>
</dbReference>
<dbReference type="PROSITE" id="PS52040">
    <property type="entry name" value="TOPO_IIA"/>
    <property type="match status" value="1"/>
</dbReference>
<dbReference type="PROSITE" id="PS00177">
    <property type="entry name" value="TOPOISOMERASE_II"/>
    <property type="match status" value="1"/>
</dbReference>
<dbReference type="PROSITE" id="PS50880">
    <property type="entry name" value="TOPRIM"/>
    <property type="match status" value="1"/>
</dbReference>
<comment type="function">
    <text>Control of topological states of DNA by transient breakage and subsequent rejoining of DNA strands. Topoisomerase II makes double-strand breaks.</text>
</comment>
<comment type="catalytic activity">
    <reaction evidence="3">
        <text>ATP-dependent breakage, passage and rejoining of double-stranded DNA.</text>
        <dbReference type="EC" id="5.6.2.2"/>
    </reaction>
</comment>
<comment type="cofactor">
    <cofactor evidence="3">
        <name>Mg(2+)</name>
        <dbReference type="ChEBI" id="CHEBI:18420"/>
    </cofactor>
    <cofactor evidence="3">
        <name>Mn(2+)</name>
        <dbReference type="ChEBI" id="CHEBI:29035"/>
    </cofactor>
    <cofactor evidence="3">
        <name>Ca(2+)</name>
        <dbReference type="ChEBI" id="CHEBI:29108"/>
    </cofactor>
    <text evidence="3">Binds two Mg(2+) per subunit. The magnesium ions form salt bridges with both the protein and the DNA. Can also accept other divalent metal cations, such as Mn(2+) or Ca(2+).</text>
</comment>
<comment type="subunit">
    <text evidence="1">Homodimer.</text>
</comment>
<comment type="tissue specificity">
    <text>Abundant in proliferative tissues.</text>
</comment>
<comment type="induction">
    <text>By light and growth factors.</text>
</comment>
<comment type="miscellaneous">
    <text>Eukaryotic topoisomerase I and II can relax both negative and positive supercoils, whereas prokaryotic enzymes relax only negative supercoils.</text>
</comment>
<comment type="similarity">
    <text evidence="6">Belongs to the type II topoisomerase family.</text>
</comment>
<sequence length="1462" mass="164206">MEKRPLQTSNAANIPSKTIEEMYQKKTQLEHILLRPDTYVGSIEKHTQNLWVYENDEMVHRAVSYVPGLYKIFDEILVNAADNKQRDPSMDSLKVTIDPEANTVSVYNNGDGVPVEIHQEEKVYVPELIFGHLLTSSNYDDNVKKTTGGRNGYGAKLTNIFSTEFIIETADGRRLKKYKQVFSNNMGTKCEPVITKCKASENWTKVTFKPDLEKFKMAYLEEDVVALMKKRVLDMAGCFGKTVKVELNGTLIRFKSFRDYADLFLKCAEKSKPMPLPRIHAKVGDRWEICISLSDGQFQQVSFVNSIATIKGGTHVDYITNQITTYIMNKVNKKKKDANVKAHTVKNHLWVFVNSLIDNPAFDSQTKETLTTRQASFGSKCDVPESMLKDVEKSGIVDTLLSWADFKQSKDLKKTDGTKTQRLRGCKAEDANEAGGRNSEKCTLILTEGDSAKALAMAGLSVVGRDHYGVFPLRGKLLNVREASSKQIMDNEEIQNIKKILGLQQNKEYTNVKSLRYGHLMIMADQDHDGSHIKGLLINFIHSFWPSLLKVPSFLVEFTTPVIRASHPNKTITSFYSMPEYEAWKERLGNSATSWKIKYYKGLGTSTPQEGREYFSDLGRHRKDFIWDDELDGNAIELAFSKKKAEGRKIWMRNFEPGTCRDHEAKLINYKDFVNKELILFSRADLFGSFKKKLYKEIKVAQFIGYVSEHSAYHHGEQSLASTIIGMAQDFVGSNNINLLKPNGQFGTCNLGGKDHASARYIYTELSPVTRCLFHEHDDKLLEYLNEDGKSIEPNWYMPIIPLVLVNGSEGIGTGWSSYIPNYNPREIIANVRRLLNGEELVPMDPWYKGFRGTIEKSAKEGGYIVNGTVTEIDEQTFRITELPIRKWTQDYKQFLESITDGAPNVKDPLIEDFRQNGDDAIVDIEIKMKPEKIATILQEGLFKKFKLTSTISTSNMHLFDAEGNKKFDTPEQILEEFFPLRLDYYEKSKEYILGNLNRLLLILDNKVRFILGVVNGEIIVSNRKKAELLIELKEKGFTPMPRKGKSTKPQVAGANDDDSEEQEDAEPETASQSVSVEGATWGDYDDLLSLPIGTLTLESVQKLLDEKTEKEKEYEILSGTPTTSLWLKDLDEFEKKLDELDLKYAEDDRKRASQGSKKANGFASKPAKKPPQPRKNTKKAKSVEPENDNSSMEIENAVEAAKPAEVAKPKGRAAPKKNIQKEPEDDIQSLQERLAAYNIESSGEKSQAMESEEVQQKAAGKKQNNKRGGAKKKSSTIVLESDSDNEVNDVDDDDDDFEEVQQKAAPVKKGGRKPAAQNAKKAPAKAPAKAPAAPKKRSVGTKQSAGQKLLTDMLQPAEGTGTSPEKKVRKMRESPFNKKSGSILGRAAAAKDISPIADCSAGSASNTPLSEDEVVEIAPQPARARPQRANRTQMKYALSESESEEDSDEDAELSDFEEDDD</sequence>
<reference key="1">
    <citation type="journal article" date="1999" name="Plant Mol. Biol.">
        <title>Cloning and characterization of a cDNA encoding topoisomerase II in pea and analysis of its expression in relation to cell proliferation.</title>
        <authorList>
            <person name="Reddy M.K."/>
            <person name="Nair S."/>
            <person name="Tewari K.K."/>
            <person name="Mudgil Y."/>
            <person name="Yadav B.S."/>
            <person name="Sopory S.K."/>
        </authorList>
    </citation>
    <scope>NUCLEOTIDE SEQUENCE [MRNA]</scope>
    <source>
        <tissue>Leaf</tissue>
    </source>
</reference>
<accession>O24308</accession>
<protein>
    <recommendedName>
        <fullName>DNA topoisomerase 2</fullName>
        <ecNumber evidence="3">5.6.2.2</ecNumber>
    </recommendedName>
    <alternativeName>
        <fullName>DNA topoisomerase II</fullName>
    </alternativeName>
    <alternativeName>
        <fullName>PsTopII</fullName>
    </alternativeName>
</protein>
<proteinExistence type="evidence at transcript level"/>
<gene>
    <name type="primary">TOP2</name>
    <name type="synonym">TOPII</name>
</gene>
<keyword id="KW-0067">ATP-binding</keyword>
<keyword id="KW-0238">DNA-binding</keyword>
<keyword id="KW-0413">Isomerase</keyword>
<keyword id="KW-0460">Magnesium</keyword>
<keyword id="KW-0479">Metal-binding</keyword>
<keyword id="KW-0547">Nucleotide-binding</keyword>
<keyword id="KW-0799">Topoisomerase</keyword>
<name>TOP2_PEA</name>
<feature type="chain" id="PRO_0000145381" description="DNA topoisomerase 2">
    <location>
        <begin position="1"/>
        <end position="1462"/>
    </location>
</feature>
<feature type="domain" description="Toprim" evidence="3">
    <location>
        <begin position="442"/>
        <end position="556"/>
    </location>
</feature>
<feature type="domain" description="Topo IIA-type catalytic" evidence="4">
    <location>
        <begin position="671"/>
        <end position="1131"/>
    </location>
</feature>
<feature type="region of interest" description="Interaction with DNA" evidence="2">
    <location>
        <begin position="332"/>
        <end position="334"/>
    </location>
</feature>
<feature type="region of interest" description="Interaction with DNA" evidence="2">
    <location>
        <begin position="947"/>
        <end position="956"/>
    </location>
</feature>
<feature type="region of interest" description="Disordered" evidence="5">
    <location>
        <begin position="1040"/>
        <end position="1077"/>
    </location>
</feature>
<feature type="region of interest" description="Disordered" evidence="5">
    <location>
        <begin position="1147"/>
        <end position="1462"/>
    </location>
</feature>
<feature type="compositionally biased region" description="Acidic residues" evidence="5">
    <location>
        <begin position="1056"/>
        <end position="1068"/>
    </location>
</feature>
<feature type="compositionally biased region" description="Basic residues" evidence="5">
    <location>
        <begin position="1167"/>
        <end position="1181"/>
    </location>
</feature>
<feature type="compositionally biased region" description="Low complexity" evidence="5">
    <location>
        <begin position="1198"/>
        <end position="1207"/>
    </location>
</feature>
<feature type="compositionally biased region" description="Polar residues" evidence="5">
    <location>
        <begin position="1240"/>
        <end position="1250"/>
    </location>
</feature>
<feature type="compositionally biased region" description="Basic residues" evidence="5">
    <location>
        <begin position="1260"/>
        <end position="1275"/>
    </location>
</feature>
<feature type="compositionally biased region" description="Acidic residues" evidence="5">
    <location>
        <begin position="1282"/>
        <end position="1300"/>
    </location>
</feature>
<feature type="compositionally biased region" description="Low complexity" evidence="5">
    <location>
        <begin position="1314"/>
        <end position="1334"/>
    </location>
</feature>
<feature type="compositionally biased region" description="Low complexity" evidence="5">
    <location>
        <begin position="1419"/>
        <end position="1430"/>
    </location>
</feature>
<feature type="compositionally biased region" description="Acidic residues" evidence="5">
    <location>
        <begin position="1442"/>
        <end position="1462"/>
    </location>
</feature>
<feature type="active site" description="O-(5'-phospho-DNA)-tyrosine intermediate" evidence="4">
    <location>
        <position position="761"/>
    </location>
</feature>
<feature type="binding site" evidence="2">
    <location>
        <position position="79"/>
    </location>
    <ligand>
        <name>ATP</name>
        <dbReference type="ChEBI" id="CHEBI:30616"/>
    </ligand>
</feature>
<feature type="binding site" evidence="2">
    <location>
        <position position="108"/>
    </location>
    <ligand>
        <name>ATP</name>
        <dbReference type="ChEBI" id="CHEBI:30616"/>
    </ligand>
</feature>
<feature type="binding site" evidence="2">
    <location>
        <begin position="136"/>
        <end position="138"/>
    </location>
    <ligand>
        <name>ATP</name>
        <dbReference type="ChEBI" id="CHEBI:30616"/>
    </ligand>
</feature>
<feature type="binding site" evidence="2">
    <location>
        <begin position="149"/>
        <end position="156"/>
    </location>
    <ligand>
        <name>ATP</name>
        <dbReference type="ChEBI" id="CHEBI:30616"/>
    </ligand>
</feature>
<feature type="binding site" evidence="2">
    <location>
        <begin position="365"/>
        <end position="367"/>
    </location>
    <ligand>
        <name>ATP</name>
        <dbReference type="ChEBI" id="CHEBI:30616"/>
    </ligand>
</feature>
<feature type="binding site" evidence="3">
    <location>
        <position position="448"/>
    </location>
    <ligand>
        <name>Mg(2+)</name>
        <dbReference type="ChEBI" id="CHEBI:18420"/>
        <label>1</label>
        <note>catalytic</note>
    </ligand>
</feature>
<feature type="binding site" evidence="3">
    <location>
        <position position="525"/>
    </location>
    <ligand>
        <name>Mg(2+)</name>
        <dbReference type="ChEBI" id="CHEBI:18420"/>
        <label>1</label>
        <note>catalytic</note>
    </ligand>
</feature>
<feature type="binding site" evidence="3">
    <location>
        <position position="525"/>
    </location>
    <ligand>
        <name>Mg(2+)</name>
        <dbReference type="ChEBI" id="CHEBI:18420"/>
        <label>2</label>
    </ligand>
</feature>
<feature type="binding site" evidence="3">
    <location>
        <position position="527"/>
    </location>
    <ligand>
        <name>Mg(2+)</name>
        <dbReference type="ChEBI" id="CHEBI:18420"/>
        <label>2</label>
    </ligand>
</feature>
<feature type="site" description="Interaction with DNA" evidence="3">
    <location>
        <position position="476"/>
    </location>
</feature>
<feature type="site" description="Interaction with DNA" evidence="3">
    <location>
        <position position="479"/>
    </location>
</feature>
<feature type="site" description="Interaction with DNA" evidence="3">
    <location>
        <position position="648"/>
    </location>
</feature>
<feature type="site" description="Interaction with DNA" evidence="3">
    <location>
        <position position="649"/>
    </location>
</feature>
<feature type="site" description="Interaction with DNA" evidence="3">
    <location>
        <position position="713"/>
    </location>
</feature>
<feature type="site" description="Interaction with DNA" evidence="3">
    <location>
        <position position="719"/>
    </location>
</feature>
<feature type="site" description="Transition state stabilizer" evidence="1">
    <location>
        <position position="760"/>
    </location>
</feature>
<feature type="site" description="Important for DNA bending; intercalates between base pairs of target DNA" evidence="1">
    <location>
        <position position="812"/>
    </location>
</feature>
<feature type="site" description="Interaction with DNA" evidence="2">
    <location>
        <position position="888"/>
    </location>
</feature>